<name>Y465_ACTP2</name>
<sequence>MIITTTPTIDGHQITEYKGLVFGEVVSGANFIRDFFASITDVIGGRSGAYESKLNSARQEALAELEKEAKRVGANAVVGVSMEYQSMGGDKGMFIVVATGTAVVIR</sequence>
<dbReference type="EMBL" id="CP000569">
    <property type="protein sequence ID" value="ABN73569.1"/>
    <property type="molecule type" value="Genomic_DNA"/>
</dbReference>
<dbReference type="RefSeq" id="WP_005600559.1">
    <property type="nucleotide sequence ID" value="NC_009053.1"/>
</dbReference>
<dbReference type="SMR" id="A3MZI3"/>
<dbReference type="STRING" id="416269.APL_0465"/>
<dbReference type="EnsemblBacteria" id="ABN73569">
    <property type="protein sequence ID" value="ABN73569"/>
    <property type="gene ID" value="APL_0465"/>
</dbReference>
<dbReference type="KEGG" id="apl:APL_0465"/>
<dbReference type="eggNOG" id="COG0393">
    <property type="taxonomic scope" value="Bacteria"/>
</dbReference>
<dbReference type="HOGENOM" id="CLU_117144_3_2_6"/>
<dbReference type="Proteomes" id="UP000001432">
    <property type="component" value="Chromosome"/>
</dbReference>
<dbReference type="Gene3D" id="3.30.110.70">
    <property type="entry name" value="Hypothetical protein apc22750. Chain B"/>
    <property type="match status" value="1"/>
</dbReference>
<dbReference type="HAMAP" id="MF_00338">
    <property type="entry name" value="UPF0145"/>
    <property type="match status" value="1"/>
</dbReference>
<dbReference type="InterPro" id="IPR035439">
    <property type="entry name" value="UPF0145_dom_sf"/>
</dbReference>
<dbReference type="InterPro" id="IPR002765">
    <property type="entry name" value="UPF0145_YbjQ-like"/>
</dbReference>
<dbReference type="PANTHER" id="PTHR34068">
    <property type="entry name" value="UPF0145 PROTEIN YBJQ"/>
    <property type="match status" value="1"/>
</dbReference>
<dbReference type="PANTHER" id="PTHR34068:SF1">
    <property type="entry name" value="UPF0145 PROTEIN YBJQ"/>
    <property type="match status" value="1"/>
</dbReference>
<dbReference type="Pfam" id="PF01906">
    <property type="entry name" value="YbjQ_1"/>
    <property type="match status" value="1"/>
</dbReference>
<dbReference type="SUPFAM" id="SSF117782">
    <property type="entry name" value="YbjQ-like"/>
    <property type="match status" value="1"/>
</dbReference>
<accession>A3MZI3</accession>
<keyword id="KW-1185">Reference proteome</keyword>
<proteinExistence type="inferred from homology"/>
<evidence type="ECO:0000255" key="1">
    <source>
        <dbReference type="HAMAP-Rule" id="MF_00338"/>
    </source>
</evidence>
<gene>
    <name type="ordered locus">APL_0465</name>
</gene>
<feature type="chain" id="PRO_1000012972" description="UPF0145 protein APL_0465">
    <location>
        <begin position="1"/>
        <end position="106"/>
    </location>
</feature>
<comment type="similarity">
    <text evidence="1">Belongs to the UPF0145 family.</text>
</comment>
<reference key="1">
    <citation type="journal article" date="2008" name="J. Bacteriol.">
        <title>The complete genome sequence of Actinobacillus pleuropneumoniae L20 (serotype 5b).</title>
        <authorList>
            <person name="Foote S.J."/>
            <person name="Bosse J.T."/>
            <person name="Bouevitch A.B."/>
            <person name="Langford P.R."/>
            <person name="Young N.M."/>
            <person name="Nash J.H.E."/>
        </authorList>
    </citation>
    <scope>NUCLEOTIDE SEQUENCE [LARGE SCALE GENOMIC DNA]</scope>
    <source>
        <strain>L20</strain>
    </source>
</reference>
<protein>
    <recommendedName>
        <fullName evidence="1">UPF0145 protein APL_0465</fullName>
    </recommendedName>
</protein>
<organism>
    <name type="scientific">Actinobacillus pleuropneumoniae serotype 5b (strain L20)</name>
    <dbReference type="NCBI Taxonomy" id="416269"/>
    <lineage>
        <taxon>Bacteria</taxon>
        <taxon>Pseudomonadati</taxon>
        <taxon>Pseudomonadota</taxon>
        <taxon>Gammaproteobacteria</taxon>
        <taxon>Pasteurellales</taxon>
        <taxon>Pasteurellaceae</taxon>
        <taxon>Actinobacillus</taxon>
    </lineage>
</organism>